<name>LRK81_ARATH</name>
<feature type="signal peptide" evidence="1">
    <location>
        <begin position="1"/>
        <end position="21"/>
    </location>
</feature>
<feature type="chain" id="PRO_0000403101" description="L-type lectin-domain containing receptor kinase VIII.1">
    <location>
        <begin position="22"/>
        <end position="715"/>
    </location>
</feature>
<feature type="topological domain" description="Extracellular" evidence="1">
    <location>
        <begin position="22"/>
        <end position="317"/>
    </location>
</feature>
<feature type="transmembrane region" description="Helical" evidence="1">
    <location>
        <begin position="318"/>
        <end position="338"/>
    </location>
</feature>
<feature type="topological domain" description="Cytoplasmic" evidence="1">
    <location>
        <begin position="339"/>
        <end position="715"/>
    </location>
</feature>
<feature type="domain" description="Protein kinase" evidence="2">
    <location>
        <begin position="376"/>
        <end position="676"/>
    </location>
</feature>
<feature type="region of interest" description="Legume-lectin like">
    <location>
        <begin position="22"/>
        <end position="247"/>
    </location>
</feature>
<feature type="region of interest" description="Disordered" evidence="4">
    <location>
        <begin position="255"/>
        <end position="296"/>
    </location>
</feature>
<feature type="compositionally biased region" description="Low complexity" evidence="4">
    <location>
        <begin position="283"/>
        <end position="296"/>
    </location>
</feature>
<feature type="active site" description="Proton acceptor" evidence="2 3">
    <location>
        <position position="500"/>
    </location>
</feature>
<feature type="binding site" evidence="2">
    <location>
        <begin position="382"/>
        <end position="390"/>
    </location>
    <ligand>
        <name>ATP</name>
        <dbReference type="ChEBI" id="CHEBI:30616"/>
    </ligand>
</feature>
<feature type="binding site" evidence="2">
    <location>
        <position position="405"/>
    </location>
    <ligand>
        <name>ATP</name>
        <dbReference type="ChEBI" id="CHEBI:30616"/>
    </ligand>
</feature>
<feature type="glycosylation site" description="N-linked (GlcNAc...) asparagine" evidence="1">
    <location>
        <position position="126"/>
    </location>
</feature>
<feature type="glycosylation site" description="N-linked (GlcNAc...) asparagine" evidence="1">
    <location>
        <position position="195"/>
    </location>
</feature>
<feature type="sequence conflict" description="In Ref. 3; BAD93993." evidence="7" ref="3">
    <original>E</original>
    <variation>K</variation>
    <location>
        <position position="654"/>
    </location>
</feature>
<dbReference type="EC" id="2.7.11.1"/>
<dbReference type="EMBL" id="AL132966">
    <property type="protein sequence ID" value="CAB67645.1"/>
    <property type="molecule type" value="Genomic_DNA"/>
</dbReference>
<dbReference type="EMBL" id="CP002686">
    <property type="protein sequence ID" value="AEE79078.1"/>
    <property type="molecule type" value="Genomic_DNA"/>
</dbReference>
<dbReference type="EMBL" id="AK220776">
    <property type="protein sequence ID" value="BAD93993.1"/>
    <property type="molecule type" value="mRNA"/>
</dbReference>
<dbReference type="EMBL" id="BT023466">
    <property type="protein sequence ID" value="AAY56457.1"/>
    <property type="molecule type" value="mRNA"/>
</dbReference>
<dbReference type="PIR" id="T45878">
    <property type="entry name" value="T45878"/>
</dbReference>
<dbReference type="RefSeq" id="NP_190906.1">
    <property type="nucleotide sequence ID" value="NM_115198.4"/>
</dbReference>
<dbReference type="SMR" id="Q9LFH9"/>
<dbReference type="BioGRID" id="9823">
    <property type="interactions" value="1"/>
</dbReference>
<dbReference type="FunCoup" id="Q9LFH9">
    <property type="interactions" value="610"/>
</dbReference>
<dbReference type="IntAct" id="Q9LFH9">
    <property type="interactions" value="1"/>
</dbReference>
<dbReference type="STRING" id="3702.Q9LFH9"/>
<dbReference type="GlyCosmos" id="Q9LFH9">
    <property type="glycosylation" value="2 sites, No reported glycans"/>
</dbReference>
<dbReference type="GlyGen" id="Q9LFH9">
    <property type="glycosylation" value="2 sites"/>
</dbReference>
<dbReference type="iPTMnet" id="Q9LFH9"/>
<dbReference type="PaxDb" id="3702-AT3G53380.1"/>
<dbReference type="ProteomicsDB" id="238725"/>
<dbReference type="EnsemblPlants" id="AT3G53380.1">
    <property type="protein sequence ID" value="AT3G53380.1"/>
    <property type="gene ID" value="AT3G53380"/>
</dbReference>
<dbReference type="GeneID" id="824506"/>
<dbReference type="Gramene" id="AT3G53380.1">
    <property type="protein sequence ID" value="AT3G53380.1"/>
    <property type="gene ID" value="AT3G53380"/>
</dbReference>
<dbReference type="KEGG" id="ath:AT3G53380"/>
<dbReference type="Araport" id="AT3G53380"/>
<dbReference type="TAIR" id="AT3G53380">
    <property type="gene designation" value="LECRK-VIII.1"/>
</dbReference>
<dbReference type="eggNOG" id="ENOG502QTBR">
    <property type="taxonomic scope" value="Eukaryota"/>
</dbReference>
<dbReference type="HOGENOM" id="CLU_000288_62_6_1"/>
<dbReference type="InParanoid" id="Q9LFH9"/>
<dbReference type="OMA" id="HNGLCKQ"/>
<dbReference type="PhylomeDB" id="Q9LFH9"/>
<dbReference type="PRO" id="PR:Q9LFH9"/>
<dbReference type="Proteomes" id="UP000006548">
    <property type="component" value="Chromosome 3"/>
</dbReference>
<dbReference type="ExpressionAtlas" id="Q9LFH9">
    <property type="expression patterns" value="baseline and differential"/>
</dbReference>
<dbReference type="GO" id="GO:0005886">
    <property type="term" value="C:plasma membrane"/>
    <property type="evidence" value="ECO:0007005"/>
    <property type="project" value="TAIR"/>
</dbReference>
<dbReference type="GO" id="GO:0005524">
    <property type="term" value="F:ATP binding"/>
    <property type="evidence" value="ECO:0007669"/>
    <property type="project" value="UniProtKB-KW"/>
</dbReference>
<dbReference type="GO" id="GO:0030246">
    <property type="term" value="F:carbohydrate binding"/>
    <property type="evidence" value="ECO:0007669"/>
    <property type="project" value="UniProtKB-KW"/>
</dbReference>
<dbReference type="GO" id="GO:0106310">
    <property type="term" value="F:protein serine kinase activity"/>
    <property type="evidence" value="ECO:0007669"/>
    <property type="project" value="RHEA"/>
</dbReference>
<dbReference type="GO" id="GO:0004674">
    <property type="term" value="F:protein serine/threonine kinase activity"/>
    <property type="evidence" value="ECO:0007669"/>
    <property type="project" value="UniProtKB-KW"/>
</dbReference>
<dbReference type="CDD" id="cd06899">
    <property type="entry name" value="lectin_legume_LecRK_Arcelin_ConA"/>
    <property type="match status" value="1"/>
</dbReference>
<dbReference type="CDD" id="cd14066">
    <property type="entry name" value="STKc_IRAK"/>
    <property type="match status" value="1"/>
</dbReference>
<dbReference type="FunFam" id="1.10.510.10:FF:000342">
    <property type="entry name" value="L-type lectin-domain containing receptor kinase VIII.1"/>
    <property type="match status" value="1"/>
</dbReference>
<dbReference type="FunFam" id="2.60.120.200:FF:000141">
    <property type="entry name" value="L-type lectin-domain containing receptor kinase VIII.1"/>
    <property type="match status" value="1"/>
</dbReference>
<dbReference type="FunFam" id="3.30.200.20:FF:000372">
    <property type="entry name" value="L-type lectin-domain containing receptor kinase VIII.1"/>
    <property type="match status" value="1"/>
</dbReference>
<dbReference type="Gene3D" id="2.60.120.200">
    <property type="match status" value="1"/>
</dbReference>
<dbReference type="Gene3D" id="3.30.200.20">
    <property type="entry name" value="Phosphorylase Kinase, domain 1"/>
    <property type="match status" value="1"/>
</dbReference>
<dbReference type="Gene3D" id="1.10.510.10">
    <property type="entry name" value="Transferase(Phosphotransferase) domain 1"/>
    <property type="match status" value="1"/>
</dbReference>
<dbReference type="InterPro" id="IPR013320">
    <property type="entry name" value="ConA-like_dom_sf"/>
</dbReference>
<dbReference type="InterPro" id="IPR011009">
    <property type="entry name" value="Kinase-like_dom_sf"/>
</dbReference>
<dbReference type="InterPro" id="IPR050528">
    <property type="entry name" value="L-type_Lectin-RKs"/>
</dbReference>
<dbReference type="InterPro" id="IPR019825">
    <property type="entry name" value="Lectin_legB_Mn/Ca_BS"/>
</dbReference>
<dbReference type="InterPro" id="IPR001220">
    <property type="entry name" value="Legume_lectin_dom"/>
</dbReference>
<dbReference type="InterPro" id="IPR000719">
    <property type="entry name" value="Prot_kinase_dom"/>
</dbReference>
<dbReference type="InterPro" id="IPR017441">
    <property type="entry name" value="Protein_kinase_ATP_BS"/>
</dbReference>
<dbReference type="InterPro" id="IPR008271">
    <property type="entry name" value="Ser/Thr_kinase_AS"/>
</dbReference>
<dbReference type="PANTHER" id="PTHR27007">
    <property type="match status" value="1"/>
</dbReference>
<dbReference type="Pfam" id="PF00139">
    <property type="entry name" value="Lectin_legB"/>
    <property type="match status" value="1"/>
</dbReference>
<dbReference type="Pfam" id="PF00069">
    <property type="entry name" value="Pkinase"/>
    <property type="match status" value="1"/>
</dbReference>
<dbReference type="SMART" id="SM00220">
    <property type="entry name" value="S_TKc"/>
    <property type="match status" value="1"/>
</dbReference>
<dbReference type="SUPFAM" id="SSF49899">
    <property type="entry name" value="Concanavalin A-like lectins/glucanases"/>
    <property type="match status" value="1"/>
</dbReference>
<dbReference type="SUPFAM" id="SSF56112">
    <property type="entry name" value="Protein kinase-like (PK-like)"/>
    <property type="match status" value="1"/>
</dbReference>
<dbReference type="PROSITE" id="PS00307">
    <property type="entry name" value="LECTIN_LEGUME_BETA"/>
    <property type="match status" value="1"/>
</dbReference>
<dbReference type="PROSITE" id="PS00107">
    <property type="entry name" value="PROTEIN_KINASE_ATP"/>
    <property type="match status" value="1"/>
</dbReference>
<dbReference type="PROSITE" id="PS50011">
    <property type="entry name" value="PROTEIN_KINASE_DOM"/>
    <property type="match status" value="1"/>
</dbReference>
<dbReference type="PROSITE" id="PS00108">
    <property type="entry name" value="PROTEIN_KINASE_ST"/>
    <property type="match status" value="1"/>
</dbReference>
<protein>
    <recommendedName>
        <fullName>L-type lectin-domain containing receptor kinase VIII.1</fullName>
        <shortName>LecRK-VIII.1</shortName>
        <ecNumber>2.7.11.1</ecNumber>
    </recommendedName>
</protein>
<reference key="1">
    <citation type="journal article" date="2000" name="Nature">
        <title>Sequence and analysis of chromosome 3 of the plant Arabidopsis thaliana.</title>
        <authorList>
            <person name="Salanoubat M."/>
            <person name="Lemcke K."/>
            <person name="Rieger M."/>
            <person name="Ansorge W."/>
            <person name="Unseld M."/>
            <person name="Fartmann B."/>
            <person name="Valle G."/>
            <person name="Bloecker H."/>
            <person name="Perez-Alonso M."/>
            <person name="Obermaier B."/>
            <person name="Delseny M."/>
            <person name="Boutry M."/>
            <person name="Grivell L.A."/>
            <person name="Mache R."/>
            <person name="Puigdomenech P."/>
            <person name="De Simone V."/>
            <person name="Choisne N."/>
            <person name="Artiguenave F."/>
            <person name="Robert C."/>
            <person name="Brottier P."/>
            <person name="Wincker P."/>
            <person name="Cattolico L."/>
            <person name="Weissenbach J."/>
            <person name="Saurin W."/>
            <person name="Quetier F."/>
            <person name="Schaefer M."/>
            <person name="Mueller-Auer S."/>
            <person name="Gabel C."/>
            <person name="Fuchs M."/>
            <person name="Benes V."/>
            <person name="Wurmbach E."/>
            <person name="Drzonek H."/>
            <person name="Erfle H."/>
            <person name="Jordan N."/>
            <person name="Bangert S."/>
            <person name="Wiedelmann R."/>
            <person name="Kranz H."/>
            <person name="Voss H."/>
            <person name="Holland R."/>
            <person name="Brandt P."/>
            <person name="Nyakatura G."/>
            <person name="Vezzi A."/>
            <person name="D'Angelo M."/>
            <person name="Pallavicini A."/>
            <person name="Toppo S."/>
            <person name="Simionati B."/>
            <person name="Conrad A."/>
            <person name="Hornischer K."/>
            <person name="Kauer G."/>
            <person name="Loehnert T.-H."/>
            <person name="Nordsiek G."/>
            <person name="Reichelt J."/>
            <person name="Scharfe M."/>
            <person name="Schoen O."/>
            <person name="Bargues M."/>
            <person name="Terol J."/>
            <person name="Climent J."/>
            <person name="Navarro P."/>
            <person name="Collado C."/>
            <person name="Perez-Perez A."/>
            <person name="Ottenwaelder B."/>
            <person name="Duchemin D."/>
            <person name="Cooke R."/>
            <person name="Laudie M."/>
            <person name="Berger-Llauro C."/>
            <person name="Purnelle B."/>
            <person name="Masuy D."/>
            <person name="de Haan M."/>
            <person name="Maarse A.C."/>
            <person name="Alcaraz J.-P."/>
            <person name="Cottet A."/>
            <person name="Casacuberta E."/>
            <person name="Monfort A."/>
            <person name="Argiriou A."/>
            <person name="Flores M."/>
            <person name="Liguori R."/>
            <person name="Vitale D."/>
            <person name="Mannhaupt G."/>
            <person name="Haase D."/>
            <person name="Schoof H."/>
            <person name="Rudd S."/>
            <person name="Zaccaria P."/>
            <person name="Mewes H.-W."/>
            <person name="Mayer K.F.X."/>
            <person name="Kaul S."/>
            <person name="Town C.D."/>
            <person name="Koo H.L."/>
            <person name="Tallon L.J."/>
            <person name="Jenkins J."/>
            <person name="Rooney T."/>
            <person name="Rizzo M."/>
            <person name="Walts A."/>
            <person name="Utterback T."/>
            <person name="Fujii C.Y."/>
            <person name="Shea T.P."/>
            <person name="Creasy T.H."/>
            <person name="Haas B."/>
            <person name="Maiti R."/>
            <person name="Wu D."/>
            <person name="Peterson J."/>
            <person name="Van Aken S."/>
            <person name="Pai G."/>
            <person name="Militscher J."/>
            <person name="Sellers P."/>
            <person name="Gill J.E."/>
            <person name="Feldblyum T.V."/>
            <person name="Preuss D."/>
            <person name="Lin X."/>
            <person name="Nierman W.C."/>
            <person name="Salzberg S.L."/>
            <person name="White O."/>
            <person name="Venter J.C."/>
            <person name="Fraser C.M."/>
            <person name="Kaneko T."/>
            <person name="Nakamura Y."/>
            <person name="Sato S."/>
            <person name="Kato T."/>
            <person name="Asamizu E."/>
            <person name="Sasamoto S."/>
            <person name="Kimura T."/>
            <person name="Idesawa K."/>
            <person name="Kawashima K."/>
            <person name="Kishida Y."/>
            <person name="Kiyokawa C."/>
            <person name="Kohara M."/>
            <person name="Matsumoto M."/>
            <person name="Matsuno A."/>
            <person name="Muraki A."/>
            <person name="Nakayama S."/>
            <person name="Nakazaki N."/>
            <person name="Shinpo S."/>
            <person name="Takeuchi C."/>
            <person name="Wada T."/>
            <person name="Watanabe A."/>
            <person name="Yamada M."/>
            <person name="Yasuda M."/>
            <person name="Tabata S."/>
        </authorList>
    </citation>
    <scope>NUCLEOTIDE SEQUENCE [LARGE SCALE GENOMIC DNA]</scope>
    <source>
        <strain>cv. Columbia</strain>
    </source>
</reference>
<reference key="2">
    <citation type="journal article" date="2017" name="Plant J.">
        <title>Araport11: a complete reannotation of the Arabidopsis thaliana reference genome.</title>
        <authorList>
            <person name="Cheng C.Y."/>
            <person name="Krishnakumar V."/>
            <person name="Chan A.P."/>
            <person name="Thibaud-Nissen F."/>
            <person name="Schobel S."/>
            <person name="Town C.D."/>
        </authorList>
    </citation>
    <scope>GENOME REANNOTATION</scope>
    <source>
        <strain>cv. Columbia</strain>
    </source>
</reference>
<reference key="3">
    <citation type="submission" date="2005-03" db="EMBL/GenBank/DDBJ databases">
        <title>Large-scale analysis of RIKEN Arabidopsis full-length (RAFL) cDNAs.</title>
        <authorList>
            <person name="Totoki Y."/>
            <person name="Seki M."/>
            <person name="Ishida J."/>
            <person name="Nakajima M."/>
            <person name="Enju A."/>
            <person name="Kamiya A."/>
            <person name="Narusaka M."/>
            <person name="Shin-i T."/>
            <person name="Nakagawa M."/>
            <person name="Sakamoto N."/>
            <person name="Oishi K."/>
            <person name="Kohara Y."/>
            <person name="Kobayashi M."/>
            <person name="Toyoda A."/>
            <person name="Sakaki Y."/>
            <person name="Sakurai T."/>
            <person name="Iida K."/>
            <person name="Akiyama K."/>
            <person name="Satou M."/>
            <person name="Toyoda T."/>
            <person name="Konagaya A."/>
            <person name="Carninci P."/>
            <person name="Kawai J."/>
            <person name="Hayashizaki Y."/>
            <person name="Shinozaki K."/>
        </authorList>
    </citation>
    <scope>NUCLEOTIDE SEQUENCE [LARGE SCALE MRNA]</scope>
    <source>
        <strain>cv. Columbia</strain>
    </source>
</reference>
<reference key="4">
    <citation type="submission" date="2005-05" db="EMBL/GenBank/DDBJ databases">
        <title>Arabidopsis ORF clones.</title>
        <authorList>
            <person name="Cheuk R.F."/>
            <person name="Chen H."/>
            <person name="Kim C.J."/>
            <person name="Shinn P."/>
            <person name="Ecker J.R."/>
        </authorList>
    </citation>
    <scope>NUCLEOTIDE SEQUENCE [LARGE SCALE MRNA]</scope>
    <source>
        <strain>cv. Columbia</strain>
    </source>
</reference>
<reference key="5">
    <citation type="journal article" date="2002" name="Crit. Rev. Plant Sci.">
        <title>Lectin receptor kinases in plants.</title>
        <authorList>
            <person name="Barre A."/>
            <person name="Herve C."/>
            <person name="Lescure B."/>
            <person name="Rouge P."/>
        </authorList>
    </citation>
    <scope>GENE FAMILY</scope>
</reference>
<reference key="6">
    <citation type="journal article" date="2003" name="Mol. Cell. Proteomics">
        <title>Large-scale analysis of in vivo phosphorylated membrane proteins by immobilized metal ion affinity chromatography and mass spectrometry.</title>
        <authorList>
            <person name="Nuehse T.S."/>
            <person name="Stensballe A."/>
            <person name="Jensen O.N."/>
            <person name="Peck S.C."/>
        </authorList>
    </citation>
    <scope>SUBCELLULAR LOCATION</scope>
</reference>
<reference key="7">
    <citation type="journal article" date="2004" name="Plant Cell">
        <title>Phosphoproteomics of the Arabidopsis plasma membrane and a new phosphorylation site database.</title>
        <authorList>
            <person name="Nuehse T.S."/>
            <person name="Stensballe A."/>
            <person name="Jensen O.N."/>
            <person name="Peck S.C."/>
        </authorList>
    </citation>
    <scope>SUBCELLULAR LOCATION</scope>
</reference>
<reference key="8">
    <citation type="journal article" date="2009" name="J. Exp. Bot.">
        <title>Arabidopsis L-type lectin receptor kinases: phylogeny, classification, and expression profiles.</title>
        <authorList>
            <person name="Bouwmeester K."/>
            <person name="Govers F."/>
        </authorList>
    </citation>
    <scope>GENE FAMILY</scope>
    <scope>NOMENCLATURE</scope>
</reference>
<evidence type="ECO:0000255" key="1"/>
<evidence type="ECO:0000255" key="2">
    <source>
        <dbReference type="PROSITE-ProRule" id="PRU00159"/>
    </source>
</evidence>
<evidence type="ECO:0000255" key="3">
    <source>
        <dbReference type="PROSITE-ProRule" id="PRU10027"/>
    </source>
</evidence>
<evidence type="ECO:0000256" key="4">
    <source>
        <dbReference type="SAM" id="MobiDB-lite"/>
    </source>
</evidence>
<evidence type="ECO:0000269" key="5">
    <source>
    </source>
</evidence>
<evidence type="ECO:0000269" key="6">
    <source>
    </source>
</evidence>
<evidence type="ECO:0000305" key="7"/>
<keyword id="KW-0067">ATP-binding</keyword>
<keyword id="KW-1003">Cell membrane</keyword>
<keyword id="KW-0325">Glycoprotein</keyword>
<keyword id="KW-0418">Kinase</keyword>
<keyword id="KW-0430">Lectin</keyword>
<keyword id="KW-0472">Membrane</keyword>
<keyword id="KW-0547">Nucleotide-binding</keyword>
<keyword id="KW-0675">Receptor</keyword>
<keyword id="KW-1185">Reference proteome</keyword>
<keyword id="KW-0723">Serine/threonine-protein kinase</keyword>
<keyword id="KW-0732">Signal</keyword>
<keyword id="KW-0808">Transferase</keyword>
<keyword id="KW-0812">Transmembrane</keyword>
<keyword id="KW-1133">Transmembrane helix</keyword>
<comment type="catalytic activity">
    <reaction>
        <text>L-seryl-[protein] + ATP = O-phospho-L-seryl-[protein] + ADP + H(+)</text>
        <dbReference type="Rhea" id="RHEA:17989"/>
        <dbReference type="Rhea" id="RHEA-COMP:9863"/>
        <dbReference type="Rhea" id="RHEA-COMP:11604"/>
        <dbReference type="ChEBI" id="CHEBI:15378"/>
        <dbReference type="ChEBI" id="CHEBI:29999"/>
        <dbReference type="ChEBI" id="CHEBI:30616"/>
        <dbReference type="ChEBI" id="CHEBI:83421"/>
        <dbReference type="ChEBI" id="CHEBI:456216"/>
        <dbReference type="EC" id="2.7.11.1"/>
    </reaction>
</comment>
<comment type="catalytic activity">
    <reaction>
        <text>L-threonyl-[protein] + ATP = O-phospho-L-threonyl-[protein] + ADP + H(+)</text>
        <dbReference type="Rhea" id="RHEA:46608"/>
        <dbReference type="Rhea" id="RHEA-COMP:11060"/>
        <dbReference type="Rhea" id="RHEA-COMP:11605"/>
        <dbReference type="ChEBI" id="CHEBI:15378"/>
        <dbReference type="ChEBI" id="CHEBI:30013"/>
        <dbReference type="ChEBI" id="CHEBI:30616"/>
        <dbReference type="ChEBI" id="CHEBI:61977"/>
        <dbReference type="ChEBI" id="CHEBI:456216"/>
        <dbReference type="EC" id="2.7.11.1"/>
    </reaction>
</comment>
<comment type="subcellular location">
    <subcellularLocation>
        <location evidence="5 6">Cell membrane</location>
        <topology evidence="5 6">Single-pass type I membrane protein</topology>
    </subcellularLocation>
</comment>
<comment type="similarity">
    <text evidence="7">In the C-terminal section; belongs to the protein kinase superfamily. Ser/Thr protein kinase family.</text>
</comment>
<comment type="similarity">
    <text evidence="7">In the N-terminal section; belongs to the leguminous lectin family.</text>
</comment>
<accession>Q9LFH9</accession>
<accession>Q570D3</accession>
<gene>
    <name type="primary">LECRK81</name>
    <name type="ordered locus">At3g53380</name>
    <name type="ORF">F4P12.80</name>
</gene>
<sequence>MSLFLSFFISILLCFFNGATTTQFDFSTLAISNLKLLGDARLSNGIVGLTRDLSVPNSGAGKVLYSNPIRFRQPGTHFPTSFSSFFSFSITNVNPSSIGGGLAFVISPDANSIGIAGGSLGLTGPNGSGSKFVAVEFDTLMDVDFKDINSNHVGFDVNGVVSSVSGDLGTVNIDLKSGNTINSWIEYDGLTRVFNVSVSYSNLKPKVPILSFPLDLDRYVNDFMFVGFSGSTQGSTEIHSIEWWSFSSSFGSSLGSGSGSPPPRANLMNPKANSVKSPPPLASQPSSSAIPISSNTQLKTSSSSSCHSRFCKENPGTIAGVVTAGAFFLALFAGALFWVYSKKFKRVERSDSFASEIIKAPKEFSYKELKAGTKNFNESRIIGHGAFGVVYRGILPETGDIVAVKRCSHSSQDKKNEFLSELSIIGSLRHRNLVRLQGWCHEKGEILLVYDLMPNGSLDKALFESRFTLPWDHRKKILLGVASALAYLHRECENQVIHRDVKSSNIMLDESFNAKLGDFGLARQIEHDKSPEATVAAGTMGYLAPEYLLTGRASEKTDVFSYGAVVLEVVSGRRPIEKDLNVQRHNVGVNPNLVEWVWGLYKEGKVSAAADSRLEGKFDEGEMWRVLVVGLACSHPDPAFRPTMRSVVQMLIGEADVPVVPKSRPTMSFSTSHLLLSLQDTLSDCNTVALNSSRSSSWSVPEHNVIIRSDDDHLV</sequence>
<proteinExistence type="evidence at transcript level"/>
<organism>
    <name type="scientific">Arabidopsis thaliana</name>
    <name type="common">Mouse-ear cress</name>
    <dbReference type="NCBI Taxonomy" id="3702"/>
    <lineage>
        <taxon>Eukaryota</taxon>
        <taxon>Viridiplantae</taxon>
        <taxon>Streptophyta</taxon>
        <taxon>Embryophyta</taxon>
        <taxon>Tracheophyta</taxon>
        <taxon>Spermatophyta</taxon>
        <taxon>Magnoliopsida</taxon>
        <taxon>eudicotyledons</taxon>
        <taxon>Gunneridae</taxon>
        <taxon>Pentapetalae</taxon>
        <taxon>rosids</taxon>
        <taxon>malvids</taxon>
        <taxon>Brassicales</taxon>
        <taxon>Brassicaceae</taxon>
        <taxon>Camelineae</taxon>
        <taxon>Arabidopsis</taxon>
    </lineage>
</organism>